<proteinExistence type="inferred from homology"/>
<keyword id="KW-0004">4Fe-4S</keyword>
<keyword id="KW-0227">DNA damage</keyword>
<keyword id="KW-0234">DNA repair</keyword>
<keyword id="KW-0326">Glycosidase</keyword>
<keyword id="KW-0378">Hydrolase</keyword>
<keyword id="KW-0408">Iron</keyword>
<keyword id="KW-0411">Iron-sulfur</keyword>
<keyword id="KW-0479">Metal-binding</keyword>
<reference key="1">
    <citation type="journal article" date="1994" name="J. Bacteriol.">
        <title>Isolation and characterization of a second exe operon required for extracellular protein secretion in Aeromonas hydrophila.</title>
        <authorList>
            <person name="Jahagirdar R."/>
            <person name="Howard S.P."/>
        </authorList>
    </citation>
    <scope>NUCLEOTIDE SEQUENCE [GENOMIC DNA]</scope>
    <source>
        <strain>Ah65</strain>
    </source>
</reference>
<comment type="function">
    <text evidence="1">Adenine glycosylase active on G-A mispairs. MutY also corrects error-prone DNA synthesis past GO lesions which are due to the oxidatively damaged form of guanine: 7,8-dihydro-8-oxoguanine (8-oxo-dGTP).</text>
</comment>
<comment type="catalytic activity">
    <reaction evidence="1">
        <text>Hydrolyzes free adenine bases from 7,8-dihydro-8-oxoguanine:adenine mismatched double-stranded DNA, leaving an apurinic site.</text>
        <dbReference type="EC" id="3.2.2.31"/>
    </reaction>
</comment>
<comment type="cofactor">
    <cofactor evidence="1">
        <name>[4Fe-4S] cluster</name>
        <dbReference type="ChEBI" id="CHEBI:49883"/>
    </cofactor>
    <text evidence="1">Binds 1 [4Fe-4S] cluster. The cluster does not appear to play a role in catalysis, but is probably involved in the proper positioning of the enzyme along the DNA strand.</text>
</comment>
<comment type="subunit">
    <text evidence="1">Monomer.</text>
</comment>
<comment type="similarity">
    <text evidence="3">Belongs to the Nth/MutY family.</text>
</comment>
<protein>
    <recommendedName>
        <fullName>Adenine DNA glycosylase</fullName>
        <ecNumber evidence="1">3.2.2.31</ecNumber>
    </recommendedName>
</protein>
<dbReference type="EC" id="3.2.2.31" evidence="1"/>
<dbReference type="EMBL" id="X81473">
    <property type="status" value="NOT_ANNOTATED_CDS"/>
    <property type="molecule type" value="Genomic_DNA"/>
</dbReference>
<dbReference type="SMR" id="P46230"/>
<dbReference type="eggNOG" id="COG1194">
    <property type="taxonomic scope" value="Bacteria"/>
</dbReference>
<dbReference type="GO" id="GO:0051539">
    <property type="term" value="F:4 iron, 4 sulfur cluster binding"/>
    <property type="evidence" value="ECO:0007669"/>
    <property type="project" value="UniProtKB-KW"/>
</dbReference>
<dbReference type="GO" id="GO:0034039">
    <property type="term" value="F:8-oxo-7,8-dihydroguanine DNA N-glycosylase activity"/>
    <property type="evidence" value="ECO:0007669"/>
    <property type="project" value="TreeGrafter"/>
</dbReference>
<dbReference type="GO" id="GO:0035485">
    <property type="term" value="F:adenine/guanine mispair binding"/>
    <property type="evidence" value="ECO:0007669"/>
    <property type="project" value="TreeGrafter"/>
</dbReference>
<dbReference type="GO" id="GO:0046872">
    <property type="term" value="F:metal ion binding"/>
    <property type="evidence" value="ECO:0007669"/>
    <property type="project" value="UniProtKB-KW"/>
</dbReference>
<dbReference type="GO" id="GO:0032357">
    <property type="term" value="F:oxidized purine DNA binding"/>
    <property type="evidence" value="ECO:0007669"/>
    <property type="project" value="TreeGrafter"/>
</dbReference>
<dbReference type="GO" id="GO:0000701">
    <property type="term" value="F:purine-specific mismatch base pair DNA N-glycosylase activity"/>
    <property type="evidence" value="ECO:0007669"/>
    <property type="project" value="UniProtKB-EC"/>
</dbReference>
<dbReference type="GO" id="GO:0006284">
    <property type="term" value="P:base-excision repair"/>
    <property type="evidence" value="ECO:0007669"/>
    <property type="project" value="InterPro"/>
</dbReference>
<dbReference type="GO" id="GO:0006298">
    <property type="term" value="P:mismatch repair"/>
    <property type="evidence" value="ECO:0007669"/>
    <property type="project" value="TreeGrafter"/>
</dbReference>
<dbReference type="CDD" id="cd00056">
    <property type="entry name" value="ENDO3c"/>
    <property type="match status" value="1"/>
</dbReference>
<dbReference type="Gene3D" id="1.10.340.30">
    <property type="entry name" value="Hypothetical protein, domain 2"/>
    <property type="match status" value="1"/>
</dbReference>
<dbReference type="InterPro" id="IPR011257">
    <property type="entry name" value="DNA_glycosylase"/>
</dbReference>
<dbReference type="InterPro" id="IPR003265">
    <property type="entry name" value="HhH-GPD_domain"/>
</dbReference>
<dbReference type="InterPro" id="IPR044298">
    <property type="entry name" value="MIG/MutY"/>
</dbReference>
<dbReference type="PANTHER" id="PTHR42944">
    <property type="entry name" value="ADENINE DNA GLYCOSYLASE"/>
    <property type="match status" value="1"/>
</dbReference>
<dbReference type="PANTHER" id="PTHR42944:SF1">
    <property type="entry name" value="ADENINE DNA GLYCOSYLASE"/>
    <property type="match status" value="1"/>
</dbReference>
<dbReference type="Pfam" id="PF00730">
    <property type="entry name" value="HhH-GPD"/>
    <property type="match status" value="1"/>
</dbReference>
<dbReference type="SUPFAM" id="SSF48150">
    <property type="entry name" value="DNA-glycosylase"/>
    <property type="match status" value="1"/>
</dbReference>
<accession>P46230</accession>
<gene>
    <name type="primary">mutY</name>
</gene>
<evidence type="ECO:0000250" key="1">
    <source>
        <dbReference type="UniProtKB" id="P17802"/>
    </source>
</evidence>
<evidence type="ECO:0000250" key="2">
    <source>
        <dbReference type="UniProtKB" id="P83847"/>
    </source>
</evidence>
<evidence type="ECO:0000305" key="3"/>
<sequence length="99" mass="11692">MSNSDNTTFATRILDWYQIHGRKTLPWQQDKTPYRVWVSEIMLQQTQVATVIPYYQRFMARFPDVQALAQAPIDEVLHHWTGLGYYARARNLHKAAQQI</sequence>
<organism>
    <name type="scientific">Aeromonas hydrophila</name>
    <dbReference type="NCBI Taxonomy" id="644"/>
    <lineage>
        <taxon>Bacteria</taxon>
        <taxon>Pseudomonadati</taxon>
        <taxon>Pseudomonadota</taxon>
        <taxon>Gammaproteobacteria</taxon>
        <taxon>Aeromonadales</taxon>
        <taxon>Aeromonadaceae</taxon>
        <taxon>Aeromonas</taxon>
    </lineage>
</organism>
<feature type="chain" id="PRO_0000102230" description="Adenine DNA glycosylase">
    <location>
        <begin position="1"/>
        <end position="99" status="greater than"/>
    </location>
</feature>
<feature type="active site" description="Proton donor/acceptor" evidence="2">
    <location>
        <position position="40"/>
    </location>
</feature>
<feature type="non-terminal residue">
    <location>
        <position position="99"/>
    </location>
</feature>
<name>MUTY_AERHY</name>